<reference key="1">
    <citation type="submission" date="2006-08" db="EMBL/GenBank/DDBJ databases">
        <title>Complete sequence of Shewanella sp. MR-4.</title>
        <authorList>
            <consortium name="US DOE Joint Genome Institute"/>
            <person name="Copeland A."/>
            <person name="Lucas S."/>
            <person name="Lapidus A."/>
            <person name="Barry K."/>
            <person name="Detter J.C."/>
            <person name="Glavina del Rio T."/>
            <person name="Hammon N."/>
            <person name="Israni S."/>
            <person name="Dalin E."/>
            <person name="Tice H."/>
            <person name="Pitluck S."/>
            <person name="Kiss H."/>
            <person name="Brettin T."/>
            <person name="Bruce D."/>
            <person name="Han C."/>
            <person name="Tapia R."/>
            <person name="Gilna P."/>
            <person name="Schmutz J."/>
            <person name="Larimer F."/>
            <person name="Land M."/>
            <person name="Hauser L."/>
            <person name="Kyrpides N."/>
            <person name="Mikhailova N."/>
            <person name="Nealson K."/>
            <person name="Konstantinidis K."/>
            <person name="Klappenbach J."/>
            <person name="Tiedje J."/>
            <person name="Richardson P."/>
        </authorList>
    </citation>
    <scope>NUCLEOTIDE SEQUENCE [LARGE SCALE GENOMIC DNA]</scope>
    <source>
        <strain>MR-4</strain>
    </source>
</reference>
<name>KAD_SHESM</name>
<keyword id="KW-0067">ATP-binding</keyword>
<keyword id="KW-0963">Cytoplasm</keyword>
<keyword id="KW-0418">Kinase</keyword>
<keyword id="KW-0545">Nucleotide biosynthesis</keyword>
<keyword id="KW-0547">Nucleotide-binding</keyword>
<keyword id="KW-0808">Transferase</keyword>
<evidence type="ECO:0000255" key="1">
    <source>
        <dbReference type="HAMAP-Rule" id="MF_00235"/>
    </source>
</evidence>
<organism>
    <name type="scientific">Shewanella sp. (strain MR-4)</name>
    <dbReference type="NCBI Taxonomy" id="60480"/>
    <lineage>
        <taxon>Bacteria</taxon>
        <taxon>Pseudomonadati</taxon>
        <taxon>Pseudomonadota</taxon>
        <taxon>Gammaproteobacteria</taxon>
        <taxon>Alteromonadales</taxon>
        <taxon>Shewanellaceae</taxon>
        <taxon>Shewanella</taxon>
    </lineage>
</organism>
<proteinExistence type="inferred from homology"/>
<comment type="function">
    <text evidence="1">Catalyzes the reversible transfer of the terminal phosphate group between ATP and AMP. Plays an important role in cellular energy homeostasis and in adenine nucleotide metabolism.</text>
</comment>
<comment type="catalytic activity">
    <reaction evidence="1">
        <text>AMP + ATP = 2 ADP</text>
        <dbReference type="Rhea" id="RHEA:12973"/>
        <dbReference type="ChEBI" id="CHEBI:30616"/>
        <dbReference type="ChEBI" id="CHEBI:456215"/>
        <dbReference type="ChEBI" id="CHEBI:456216"/>
        <dbReference type="EC" id="2.7.4.3"/>
    </reaction>
</comment>
<comment type="pathway">
    <text evidence="1">Purine metabolism; AMP biosynthesis via salvage pathway; AMP from ADP: step 1/1.</text>
</comment>
<comment type="subunit">
    <text evidence="1">Monomer.</text>
</comment>
<comment type="subcellular location">
    <subcellularLocation>
        <location evidence="1">Cytoplasm</location>
    </subcellularLocation>
</comment>
<comment type="domain">
    <text evidence="1">Consists of three domains, a large central CORE domain and two small peripheral domains, NMPbind and LID, which undergo movements during catalysis. The LID domain closes over the site of phosphoryl transfer upon ATP binding. Assembling and dissambling the active center during each catalytic cycle provides an effective means to prevent ATP hydrolysis.</text>
</comment>
<comment type="similarity">
    <text evidence="1">Belongs to the adenylate kinase family.</text>
</comment>
<protein>
    <recommendedName>
        <fullName evidence="1">Adenylate kinase</fullName>
        <shortName evidence="1">AK</shortName>
        <ecNumber evidence="1">2.7.4.3</ecNumber>
    </recommendedName>
    <alternativeName>
        <fullName evidence="1">ATP-AMP transphosphorylase</fullName>
    </alternativeName>
    <alternativeName>
        <fullName evidence="1">ATP:AMP phosphotransferase</fullName>
    </alternativeName>
    <alternativeName>
        <fullName evidence="1">Adenylate monophosphate kinase</fullName>
    </alternativeName>
</protein>
<sequence length="214" mass="23063">MRIILLGAPGAGKGTQAQFIMEQYGIPQISTGDMLRAAVKAGTPLGLEAKKVMDAGQLVSDDLIIGLVKERIAQDDCVKGFLLDGFPRTIPQADAMAANGISIDHVIEIDVPDEEIVKRMSGRRVHPGSGRVYHVVFNPPKVEGKDDVTGEDLAIRPDDEEATVRKRLGIYHEQTKPLVEYYGKVAAAGNTQYHKFDGTQSVAAVSAQLASVLK</sequence>
<gene>
    <name evidence="1" type="primary">adk</name>
    <name type="ordered locus">Shewmr4_2249</name>
</gene>
<feature type="chain" id="PRO_1000058901" description="Adenylate kinase">
    <location>
        <begin position="1"/>
        <end position="214"/>
    </location>
</feature>
<feature type="region of interest" description="NMP" evidence="1">
    <location>
        <begin position="30"/>
        <end position="59"/>
    </location>
</feature>
<feature type="region of interest" description="LID" evidence="1">
    <location>
        <begin position="122"/>
        <end position="159"/>
    </location>
</feature>
<feature type="binding site" evidence="1">
    <location>
        <begin position="10"/>
        <end position="15"/>
    </location>
    <ligand>
        <name>ATP</name>
        <dbReference type="ChEBI" id="CHEBI:30616"/>
    </ligand>
</feature>
<feature type="binding site" evidence="1">
    <location>
        <position position="31"/>
    </location>
    <ligand>
        <name>AMP</name>
        <dbReference type="ChEBI" id="CHEBI:456215"/>
    </ligand>
</feature>
<feature type="binding site" evidence="1">
    <location>
        <position position="36"/>
    </location>
    <ligand>
        <name>AMP</name>
        <dbReference type="ChEBI" id="CHEBI:456215"/>
    </ligand>
</feature>
<feature type="binding site" evidence="1">
    <location>
        <begin position="57"/>
        <end position="59"/>
    </location>
    <ligand>
        <name>AMP</name>
        <dbReference type="ChEBI" id="CHEBI:456215"/>
    </ligand>
</feature>
<feature type="binding site" evidence="1">
    <location>
        <begin position="85"/>
        <end position="88"/>
    </location>
    <ligand>
        <name>AMP</name>
        <dbReference type="ChEBI" id="CHEBI:456215"/>
    </ligand>
</feature>
<feature type="binding site" evidence="1">
    <location>
        <position position="92"/>
    </location>
    <ligand>
        <name>AMP</name>
        <dbReference type="ChEBI" id="CHEBI:456215"/>
    </ligand>
</feature>
<feature type="binding site" evidence="1">
    <location>
        <position position="123"/>
    </location>
    <ligand>
        <name>ATP</name>
        <dbReference type="ChEBI" id="CHEBI:30616"/>
    </ligand>
</feature>
<feature type="binding site" evidence="1">
    <location>
        <begin position="132"/>
        <end position="133"/>
    </location>
    <ligand>
        <name>ATP</name>
        <dbReference type="ChEBI" id="CHEBI:30616"/>
    </ligand>
</feature>
<feature type="binding site" evidence="1">
    <location>
        <position position="156"/>
    </location>
    <ligand>
        <name>AMP</name>
        <dbReference type="ChEBI" id="CHEBI:456215"/>
    </ligand>
</feature>
<feature type="binding site" evidence="1">
    <location>
        <position position="167"/>
    </location>
    <ligand>
        <name>AMP</name>
        <dbReference type="ChEBI" id="CHEBI:456215"/>
    </ligand>
</feature>
<feature type="binding site" evidence="1">
    <location>
        <position position="200"/>
    </location>
    <ligand>
        <name>ATP</name>
        <dbReference type="ChEBI" id="CHEBI:30616"/>
    </ligand>
</feature>
<accession>Q0HHZ7</accession>
<dbReference type="EC" id="2.7.4.3" evidence="1"/>
<dbReference type="EMBL" id="CP000446">
    <property type="protein sequence ID" value="ABI39320.1"/>
    <property type="molecule type" value="Genomic_DNA"/>
</dbReference>
<dbReference type="RefSeq" id="WP_011623010.1">
    <property type="nucleotide sequence ID" value="NC_008321.1"/>
</dbReference>
<dbReference type="SMR" id="Q0HHZ7"/>
<dbReference type="KEGG" id="she:Shewmr4_2249"/>
<dbReference type="HOGENOM" id="CLU_032354_1_2_6"/>
<dbReference type="UniPathway" id="UPA00588">
    <property type="reaction ID" value="UER00649"/>
</dbReference>
<dbReference type="GO" id="GO:0005737">
    <property type="term" value="C:cytoplasm"/>
    <property type="evidence" value="ECO:0007669"/>
    <property type="project" value="UniProtKB-SubCell"/>
</dbReference>
<dbReference type="GO" id="GO:0004017">
    <property type="term" value="F:adenylate kinase activity"/>
    <property type="evidence" value="ECO:0007669"/>
    <property type="project" value="UniProtKB-UniRule"/>
</dbReference>
<dbReference type="GO" id="GO:0005524">
    <property type="term" value="F:ATP binding"/>
    <property type="evidence" value="ECO:0007669"/>
    <property type="project" value="UniProtKB-UniRule"/>
</dbReference>
<dbReference type="GO" id="GO:0044209">
    <property type="term" value="P:AMP salvage"/>
    <property type="evidence" value="ECO:0007669"/>
    <property type="project" value="UniProtKB-UniRule"/>
</dbReference>
<dbReference type="CDD" id="cd01428">
    <property type="entry name" value="ADK"/>
    <property type="match status" value="1"/>
</dbReference>
<dbReference type="FunFam" id="3.40.50.300:FF:000106">
    <property type="entry name" value="Adenylate kinase mitochondrial"/>
    <property type="match status" value="1"/>
</dbReference>
<dbReference type="Gene3D" id="3.40.50.300">
    <property type="entry name" value="P-loop containing nucleotide triphosphate hydrolases"/>
    <property type="match status" value="1"/>
</dbReference>
<dbReference type="HAMAP" id="MF_00235">
    <property type="entry name" value="Adenylate_kinase_Adk"/>
    <property type="match status" value="1"/>
</dbReference>
<dbReference type="InterPro" id="IPR006259">
    <property type="entry name" value="Adenyl_kin_sub"/>
</dbReference>
<dbReference type="InterPro" id="IPR000850">
    <property type="entry name" value="Adenylat/UMP-CMP_kin"/>
</dbReference>
<dbReference type="InterPro" id="IPR033690">
    <property type="entry name" value="Adenylat_kinase_CS"/>
</dbReference>
<dbReference type="InterPro" id="IPR007862">
    <property type="entry name" value="Adenylate_kinase_lid-dom"/>
</dbReference>
<dbReference type="InterPro" id="IPR027417">
    <property type="entry name" value="P-loop_NTPase"/>
</dbReference>
<dbReference type="NCBIfam" id="TIGR01351">
    <property type="entry name" value="adk"/>
    <property type="match status" value="1"/>
</dbReference>
<dbReference type="NCBIfam" id="NF001379">
    <property type="entry name" value="PRK00279.1-1"/>
    <property type="match status" value="1"/>
</dbReference>
<dbReference type="NCBIfam" id="NF001380">
    <property type="entry name" value="PRK00279.1-2"/>
    <property type="match status" value="1"/>
</dbReference>
<dbReference type="NCBIfam" id="NF001381">
    <property type="entry name" value="PRK00279.1-3"/>
    <property type="match status" value="1"/>
</dbReference>
<dbReference type="NCBIfam" id="NF011100">
    <property type="entry name" value="PRK14527.1"/>
    <property type="match status" value="1"/>
</dbReference>
<dbReference type="PANTHER" id="PTHR23359">
    <property type="entry name" value="NUCLEOTIDE KINASE"/>
    <property type="match status" value="1"/>
</dbReference>
<dbReference type="Pfam" id="PF00406">
    <property type="entry name" value="ADK"/>
    <property type="match status" value="1"/>
</dbReference>
<dbReference type="Pfam" id="PF05191">
    <property type="entry name" value="ADK_lid"/>
    <property type="match status" value="1"/>
</dbReference>
<dbReference type="PRINTS" id="PR00094">
    <property type="entry name" value="ADENYLTKNASE"/>
</dbReference>
<dbReference type="SUPFAM" id="SSF52540">
    <property type="entry name" value="P-loop containing nucleoside triphosphate hydrolases"/>
    <property type="match status" value="1"/>
</dbReference>
<dbReference type="PROSITE" id="PS00113">
    <property type="entry name" value="ADENYLATE_KINASE"/>
    <property type="match status" value="1"/>
</dbReference>